<protein>
    <recommendedName>
        <fullName>Major urinary protein 2</fullName>
        <shortName>MUP 2</shortName>
    </recommendedName>
</protein>
<feature type="signal peptide">
    <location>
        <begin position="1"/>
        <end position="18"/>
    </location>
</feature>
<feature type="chain" id="PRO_0000017928" description="Major urinary protein 2">
    <location>
        <begin position="19"/>
        <end position="180"/>
    </location>
</feature>
<feature type="disulfide bond" evidence="1">
    <location>
        <begin position="82"/>
        <end position="175"/>
    </location>
</feature>
<feature type="sequence conflict" description="In Ref. 2; CAC34259." evidence="2" ref="2">
    <original>K</original>
    <variation>Q</variation>
    <location>
        <position position="154"/>
    </location>
</feature>
<feature type="strand" evidence="4">
    <location>
        <begin position="23"/>
        <end position="25"/>
    </location>
</feature>
<feature type="helix" evidence="5">
    <location>
        <begin position="30"/>
        <end position="33"/>
    </location>
</feature>
<feature type="strand" evidence="5">
    <location>
        <begin position="38"/>
        <end position="46"/>
    </location>
</feature>
<feature type="helix" evidence="5">
    <location>
        <begin position="47"/>
        <end position="50"/>
    </location>
</feature>
<feature type="strand" evidence="5">
    <location>
        <begin position="59"/>
        <end position="65"/>
    </location>
</feature>
<feature type="strand" evidence="5">
    <location>
        <begin position="67"/>
        <end position="78"/>
    </location>
</feature>
<feature type="strand" evidence="5">
    <location>
        <begin position="81"/>
        <end position="91"/>
    </location>
</feature>
<feature type="turn" evidence="3">
    <location>
        <begin position="94"/>
        <end position="96"/>
    </location>
</feature>
<feature type="strand" evidence="5">
    <location>
        <begin position="98"/>
        <end position="113"/>
    </location>
</feature>
<feature type="strand" evidence="5">
    <location>
        <begin position="115"/>
        <end position="127"/>
    </location>
</feature>
<feature type="strand" evidence="5">
    <location>
        <begin position="130"/>
        <end position="142"/>
    </location>
</feature>
<feature type="helix" evidence="5">
    <location>
        <begin position="146"/>
        <end position="158"/>
    </location>
</feature>
<feature type="helix" evidence="5">
    <location>
        <begin position="163"/>
        <end position="165"/>
    </location>
</feature>
<feature type="strand" evidence="5">
    <location>
        <begin position="166"/>
        <end position="168"/>
    </location>
</feature>
<feature type="turn" evidence="4">
    <location>
        <begin position="170"/>
        <end position="172"/>
    </location>
</feature>
<reference key="1">
    <citation type="journal article" date="1987" name="Mol. Cell. Biol.">
        <title>Nucleotide sequences of liver, lachrymal, and submaxillary gland mouse major urinary protein mRNAs: mosaic structure and construction of panels of gene-specific synthetic oligonucleotide probes.</title>
        <authorList>
            <person name="Shahan K."/>
            <person name="Gilmartin M."/>
            <person name="Derman E."/>
        </authorList>
    </citation>
    <scope>NUCLEOTIDE SEQUENCE [MRNA]</scope>
    <source>
        <strain>BALB/cJ</strain>
        <tissue>Liver</tissue>
    </source>
</reference>
<reference key="2">
    <citation type="submission" date="2001-02" db="EMBL/GenBank/DDBJ databases">
        <authorList>
            <person name="Spisni A."/>
        </authorList>
    </citation>
    <scope>NUCLEOTIDE SEQUENCE [MRNA]</scope>
    <source>
        <strain>SWR/J</strain>
        <tissue>Liver</tissue>
    </source>
</reference>
<reference key="3">
    <citation type="journal article" date="2004" name="Genome Res.">
        <title>The status, quality, and expansion of the NIH full-length cDNA project: the Mammalian Gene Collection (MGC).</title>
        <authorList>
            <consortium name="The MGC Project Team"/>
        </authorList>
    </citation>
    <scope>NUCLEOTIDE SEQUENCE [LARGE SCALE MRNA]</scope>
    <source>
        <strain>FVB/N</strain>
        <tissue>Liver</tissue>
    </source>
</reference>
<reference key="4">
    <citation type="journal article" date="1999" name="Eur. J. Biochem.">
        <title>Solution structure of a recombinant mouse major urinary protein.</title>
        <authorList>
            <person name="Luecke C."/>
            <person name="Franzoni L."/>
            <person name="Abbate F."/>
            <person name="Lohr F."/>
            <person name="Ferrari E."/>
            <person name="Sorbi R.T."/>
            <person name="Rueterjans H."/>
            <person name="Spisni A."/>
        </authorList>
    </citation>
    <scope>STRUCTURE BY NMR</scope>
</reference>
<reference key="5">
    <citation type="journal article" date="1999" name="J. Biomol. NMR">
        <title>Complete 1H, 15N and 13C assignment of a recombinant mouse major urinary protein.</title>
        <authorList>
            <person name="Abbate F."/>
            <person name="Franzoni L."/>
            <person name="Lohr F."/>
            <person name="Luecke C."/>
            <person name="Ferrari E."/>
            <person name="Sorbi R.T."/>
            <person name="Rueterjans H."/>
            <person name="Spisni A."/>
        </authorList>
    </citation>
    <scope>STRUCTURE BY NMR</scope>
</reference>
<accession>P11589</accession>
<accession>Q99JF6</accession>
<dbReference type="EMBL" id="M16356">
    <property type="protein sequence ID" value="AAA39768.1"/>
    <property type="molecule type" value="mRNA"/>
</dbReference>
<dbReference type="EMBL" id="AJ309921">
    <property type="protein sequence ID" value="CAC34259.1"/>
    <property type="molecule type" value="mRNA"/>
</dbReference>
<dbReference type="EMBL" id="BC012259">
    <property type="protein sequence ID" value="AAH12259.1"/>
    <property type="molecule type" value="mRNA"/>
</dbReference>
<dbReference type="EMBL" id="BC059097">
    <property type="protein sequence ID" value="AAH59097.1"/>
    <property type="molecule type" value="mRNA"/>
</dbReference>
<dbReference type="PDB" id="1DF3">
    <property type="method" value="NMR"/>
    <property type="chains" value="A=19-180"/>
</dbReference>
<dbReference type="PDB" id="1JV4">
    <property type="method" value="X-ray"/>
    <property type="resolution" value="1.75 A"/>
    <property type="chains" value="A=19-180"/>
</dbReference>
<dbReference type="PDB" id="1ZND">
    <property type="method" value="X-ray"/>
    <property type="resolution" value="1.60 A"/>
    <property type="chains" value="A=19-180"/>
</dbReference>
<dbReference type="PDB" id="1ZNE">
    <property type="method" value="X-ray"/>
    <property type="resolution" value="2.00 A"/>
    <property type="chains" value="A=19-180"/>
</dbReference>
<dbReference type="PDB" id="1ZNG">
    <property type="method" value="X-ray"/>
    <property type="resolution" value="1.60 A"/>
    <property type="chains" value="A=19-180"/>
</dbReference>
<dbReference type="PDB" id="1ZNH">
    <property type="method" value="X-ray"/>
    <property type="resolution" value="2.10 A"/>
    <property type="chains" value="A=19-180"/>
</dbReference>
<dbReference type="PDB" id="1ZNK">
    <property type="method" value="X-ray"/>
    <property type="resolution" value="1.60 A"/>
    <property type="chains" value="A=19-180"/>
</dbReference>
<dbReference type="PDB" id="1ZNL">
    <property type="method" value="X-ray"/>
    <property type="resolution" value="1.70 A"/>
    <property type="chains" value="A=19-180"/>
</dbReference>
<dbReference type="PDB" id="2DM5">
    <property type="method" value="X-ray"/>
    <property type="resolution" value="1.70 A"/>
    <property type="chains" value="A=19-180"/>
</dbReference>
<dbReference type="PDB" id="2NND">
    <property type="method" value="X-ray"/>
    <property type="resolution" value="1.60 A"/>
    <property type="chains" value="A=19-180"/>
</dbReference>
<dbReference type="PDB" id="2NNE">
    <property type="method" value="X-ray"/>
    <property type="resolution" value="1.60 A"/>
    <property type="chains" value="A=19-180"/>
</dbReference>
<dbReference type="PDB" id="2OZQ">
    <property type="method" value="X-ray"/>
    <property type="resolution" value="1.80 A"/>
    <property type="chains" value="A=19-180"/>
</dbReference>
<dbReference type="PDBsum" id="1DF3"/>
<dbReference type="PDBsum" id="1JV4"/>
<dbReference type="PDBsum" id="1ZND"/>
<dbReference type="PDBsum" id="1ZNE"/>
<dbReference type="PDBsum" id="1ZNG"/>
<dbReference type="PDBsum" id="1ZNH"/>
<dbReference type="PDBsum" id="1ZNK"/>
<dbReference type="PDBsum" id="1ZNL"/>
<dbReference type="PDBsum" id="2DM5"/>
<dbReference type="PDBsum" id="2NND"/>
<dbReference type="PDBsum" id="2NNE"/>
<dbReference type="PDBsum" id="2OZQ"/>
<dbReference type="BMRB" id="P11589"/>
<dbReference type="SMR" id="P11589"/>
<dbReference type="FunCoup" id="P11589">
    <property type="interactions" value="323"/>
</dbReference>
<dbReference type="STRING" id="10090.ENSMUSP00000095655"/>
<dbReference type="Allergome" id="478">
    <property type="allergen name" value="Mus m 1"/>
</dbReference>
<dbReference type="Allergome" id="8430">
    <property type="allergen name" value="Mus m 1.0102"/>
</dbReference>
<dbReference type="GlyGen" id="P11589">
    <property type="glycosylation" value="1 site, 1 O-linked glycan (1 site)"/>
</dbReference>
<dbReference type="iPTMnet" id="P11589"/>
<dbReference type="PhosphoSitePlus" id="P11589"/>
<dbReference type="SwissPalm" id="P11589"/>
<dbReference type="jPOST" id="P11589"/>
<dbReference type="PaxDb" id="10090-ENSMUSP00000095655"/>
<dbReference type="PeptideAtlas" id="P11589"/>
<dbReference type="ProteomicsDB" id="286086"/>
<dbReference type="AGR" id="MGI:97234"/>
<dbReference type="MGI" id="MGI:97234">
    <property type="gene designation" value="Mup2"/>
</dbReference>
<dbReference type="eggNOG" id="ENOG502S6GK">
    <property type="taxonomic scope" value="Eukaryota"/>
</dbReference>
<dbReference type="InParanoid" id="P11589"/>
<dbReference type="ChiTaRS" id="Mup2">
    <property type="organism name" value="mouse"/>
</dbReference>
<dbReference type="EvolutionaryTrace" id="P11589"/>
<dbReference type="PRO" id="PR:P11589"/>
<dbReference type="Proteomes" id="UP000000589">
    <property type="component" value="Unplaced"/>
</dbReference>
<dbReference type="RNAct" id="P11589">
    <property type="molecule type" value="protein"/>
</dbReference>
<dbReference type="GO" id="GO:0005829">
    <property type="term" value="C:cytosol"/>
    <property type="evidence" value="ECO:0000250"/>
    <property type="project" value="UniProtKB"/>
</dbReference>
<dbReference type="GO" id="GO:0005615">
    <property type="term" value="C:extracellular space"/>
    <property type="evidence" value="ECO:0000314"/>
    <property type="project" value="MGI"/>
</dbReference>
<dbReference type="GO" id="GO:0005634">
    <property type="term" value="C:nucleus"/>
    <property type="evidence" value="ECO:0000250"/>
    <property type="project" value="UniProtKB"/>
</dbReference>
<dbReference type="GO" id="GO:0005009">
    <property type="term" value="F:insulin receptor activity"/>
    <property type="evidence" value="ECO:0000250"/>
    <property type="project" value="UniProtKB"/>
</dbReference>
<dbReference type="GO" id="GO:0005550">
    <property type="term" value="F:pheromone binding"/>
    <property type="evidence" value="ECO:0000250"/>
    <property type="project" value="UniProtKB"/>
</dbReference>
<dbReference type="GO" id="GO:0036094">
    <property type="term" value="F:small molecule binding"/>
    <property type="evidence" value="ECO:0007669"/>
    <property type="project" value="InterPro"/>
</dbReference>
<dbReference type="GO" id="GO:0009060">
    <property type="term" value="P:aerobic respiration"/>
    <property type="evidence" value="ECO:0000250"/>
    <property type="project" value="UniProtKB"/>
</dbReference>
<dbReference type="GO" id="GO:0071396">
    <property type="term" value="P:cellular response to lipid"/>
    <property type="evidence" value="ECO:0000250"/>
    <property type="project" value="UniProtKB"/>
</dbReference>
<dbReference type="GO" id="GO:0006112">
    <property type="term" value="P:energy reserve metabolic process"/>
    <property type="evidence" value="ECO:0000250"/>
    <property type="project" value="UniProtKB"/>
</dbReference>
<dbReference type="GO" id="GO:0042593">
    <property type="term" value="P:glucose homeostasis"/>
    <property type="evidence" value="ECO:0000250"/>
    <property type="project" value="UniProtKB"/>
</dbReference>
<dbReference type="GO" id="GO:0031649">
    <property type="term" value="P:heat generation"/>
    <property type="evidence" value="ECO:0000250"/>
    <property type="project" value="UniProtKB"/>
</dbReference>
<dbReference type="GO" id="GO:0045475">
    <property type="term" value="P:locomotor rhythm"/>
    <property type="evidence" value="ECO:0000250"/>
    <property type="project" value="UniProtKB"/>
</dbReference>
<dbReference type="GO" id="GO:0007005">
    <property type="term" value="P:mitochondrion organization"/>
    <property type="evidence" value="ECO:0000250"/>
    <property type="project" value="UniProtKB"/>
</dbReference>
<dbReference type="GO" id="GO:0045892">
    <property type="term" value="P:negative regulation of DNA-templated transcription"/>
    <property type="evidence" value="ECO:0000250"/>
    <property type="project" value="UniProtKB"/>
</dbReference>
<dbReference type="GO" id="GO:0045721">
    <property type="term" value="P:negative regulation of gluconeogenesis"/>
    <property type="evidence" value="ECO:0000250"/>
    <property type="project" value="UniProtKB"/>
</dbReference>
<dbReference type="GO" id="GO:0061179">
    <property type="term" value="P:negative regulation of insulin secretion involved in cellular response to glucose stimulus"/>
    <property type="evidence" value="ECO:0000250"/>
    <property type="project" value="UniProtKB"/>
</dbReference>
<dbReference type="GO" id="GO:0051055">
    <property type="term" value="P:negative regulation of lipid biosynthetic process"/>
    <property type="evidence" value="ECO:0000250"/>
    <property type="project" value="UniProtKB"/>
</dbReference>
<dbReference type="GO" id="GO:0010888">
    <property type="term" value="P:negative regulation of lipid storage"/>
    <property type="evidence" value="ECO:0000250"/>
    <property type="project" value="UniProtKB"/>
</dbReference>
<dbReference type="GO" id="GO:0010628">
    <property type="term" value="P:positive regulation of gene expression"/>
    <property type="evidence" value="ECO:0000250"/>
    <property type="project" value="UniProtKB"/>
</dbReference>
<dbReference type="GO" id="GO:0010907">
    <property type="term" value="P:positive regulation of glucose metabolic process"/>
    <property type="evidence" value="ECO:0000250"/>
    <property type="project" value="UniProtKB"/>
</dbReference>
<dbReference type="GO" id="GO:0045834">
    <property type="term" value="P:positive regulation of lipid metabolic process"/>
    <property type="evidence" value="ECO:0000250"/>
    <property type="project" value="UniProtKB"/>
</dbReference>
<dbReference type="GO" id="GO:0051897">
    <property type="term" value="P:positive regulation of phosphatidylinositol 3-kinase/protein kinase B signal transduction"/>
    <property type="evidence" value="ECO:0000250"/>
    <property type="project" value="UniProtKB"/>
</dbReference>
<dbReference type="CDD" id="cd19428">
    <property type="entry name" value="lipocalin_MUP-like"/>
    <property type="match status" value="1"/>
</dbReference>
<dbReference type="FunFam" id="2.40.128.20:FF:000008">
    <property type="entry name" value="Major urinary protein"/>
    <property type="match status" value="1"/>
</dbReference>
<dbReference type="Gene3D" id="2.40.128.20">
    <property type="match status" value="1"/>
</dbReference>
<dbReference type="InterPro" id="IPR012674">
    <property type="entry name" value="Calycin"/>
</dbReference>
<dbReference type="InterPro" id="IPR002345">
    <property type="entry name" value="Lipocalin"/>
</dbReference>
<dbReference type="InterPro" id="IPR022272">
    <property type="entry name" value="Lipocalin_CS"/>
</dbReference>
<dbReference type="InterPro" id="IPR000566">
    <property type="entry name" value="Lipocln_cytosolic_FA-bd_dom"/>
</dbReference>
<dbReference type="InterPro" id="IPR002971">
    <property type="entry name" value="Maj_urinary"/>
</dbReference>
<dbReference type="PANTHER" id="PTHR11430">
    <property type="entry name" value="LIPOCALIN"/>
    <property type="match status" value="1"/>
</dbReference>
<dbReference type="PANTHER" id="PTHR11430:SF76">
    <property type="entry name" value="MAJOR URINARY PROTEIN 1-RELATED"/>
    <property type="match status" value="1"/>
</dbReference>
<dbReference type="Pfam" id="PF00061">
    <property type="entry name" value="Lipocalin"/>
    <property type="match status" value="1"/>
</dbReference>
<dbReference type="PRINTS" id="PR00179">
    <property type="entry name" value="LIPOCALIN"/>
</dbReference>
<dbReference type="PRINTS" id="PR01221">
    <property type="entry name" value="MAJORURINARY"/>
</dbReference>
<dbReference type="SUPFAM" id="SSF50814">
    <property type="entry name" value="Lipocalins"/>
    <property type="match status" value="1"/>
</dbReference>
<dbReference type="PROSITE" id="PS00213">
    <property type="entry name" value="LIPOCALIN"/>
    <property type="match status" value="1"/>
</dbReference>
<proteinExistence type="evidence at protein level"/>
<keyword id="KW-0002">3D-structure</keyword>
<keyword id="KW-1015">Disulfide bond</keyword>
<keyword id="KW-0590">Pheromone-binding</keyword>
<keyword id="KW-1185">Reference proteome</keyword>
<keyword id="KW-0964">Secreted</keyword>
<keyword id="KW-0732">Signal</keyword>
<keyword id="KW-0813">Transport</keyword>
<evidence type="ECO:0000250" key="1"/>
<evidence type="ECO:0000305" key="2"/>
<evidence type="ECO:0007829" key="3">
    <source>
        <dbReference type="PDB" id="1DF3"/>
    </source>
</evidence>
<evidence type="ECO:0007829" key="4">
    <source>
        <dbReference type="PDB" id="1JV4"/>
    </source>
</evidence>
<evidence type="ECO:0007829" key="5">
    <source>
        <dbReference type="PDB" id="1ZND"/>
    </source>
</evidence>
<organism>
    <name type="scientific">Mus musculus</name>
    <name type="common">Mouse</name>
    <dbReference type="NCBI Taxonomy" id="10090"/>
    <lineage>
        <taxon>Eukaryota</taxon>
        <taxon>Metazoa</taxon>
        <taxon>Chordata</taxon>
        <taxon>Craniata</taxon>
        <taxon>Vertebrata</taxon>
        <taxon>Euteleostomi</taxon>
        <taxon>Mammalia</taxon>
        <taxon>Eutheria</taxon>
        <taxon>Euarchontoglires</taxon>
        <taxon>Glires</taxon>
        <taxon>Rodentia</taxon>
        <taxon>Myomorpha</taxon>
        <taxon>Muroidea</taxon>
        <taxon>Muridae</taxon>
        <taxon>Murinae</taxon>
        <taxon>Mus</taxon>
        <taxon>Mus</taxon>
    </lineage>
</organism>
<sequence length="180" mass="20664">MKMLLLLCLGLTLVCVHAEEASSTGRNFNVEKINGEWHTIILASDKREKIEDNGNFRLFLEQIHVLEKSLVLKFHTVRDEECSELSMVADKTEKAGEYSVTYDGFNTFTIPKTDYDNFLMAHLINEKDGETFQLMGLYGREPDLSSDIKERFAKLCEEHGILRENIIDLSNANRCLQARE</sequence>
<gene>
    <name type="primary">Mup2</name>
</gene>
<comment type="function">
    <text>Binds pheromones that are released from drying urine of males. These pheromones affect the sexual behavior of females.</text>
</comment>
<comment type="subcellular location">
    <subcellularLocation>
        <location>Secreted</location>
    </subcellularLocation>
</comment>
<comment type="tissue specificity">
    <text>Abundant in the urine of adult male mice but absent from that of females.</text>
</comment>
<comment type="similarity">
    <text evidence="2">Belongs to the calycin superfamily. Lipocalin family.</text>
</comment>
<name>MUP2_MOUSE</name>